<keyword id="KW-1003">Cell membrane</keyword>
<keyword id="KW-0472">Membrane</keyword>
<keyword id="KW-1185">Reference proteome</keyword>
<keyword id="KW-0812">Transmembrane</keyword>
<keyword id="KW-1133">Transmembrane helix</keyword>
<evidence type="ECO:0000255" key="1"/>
<evidence type="ECO:0000305" key="2"/>
<sequence length="138" mass="15094">MEIGYIFILAGFLVIALEAIVPGLYFPAWGIALLIYGVVLLIIPQYAFISAIIAGVLTIIILHKFVYGVGKEIKVGAERFVGMIGIAIEDFEENGYGRIKIENQIWLAKSKDKIKNGDKVEIVGVEGVSLIVKKVEGE</sequence>
<organism>
    <name type="scientific">Methanocaldococcus jannaschii (strain ATCC 43067 / DSM 2661 / JAL-1 / JCM 10045 / NBRC 100440)</name>
    <name type="common">Methanococcus jannaschii</name>
    <dbReference type="NCBI Taxonomy" id="243232"/>
    <lineage>
        <taxon>Archaea</taxon>
        <taxon>Methanobacteriati</taxon>
        <taxon>Methanobacteriota</taxon>
        <taxon>Methanomada group</taxon>
        <taxon>Methanococci</taxon>
        <taxon>Methanococcales</taxon>
        <taxon>Methanocaldococcaceae</taxon>
        <taxon>Methanocaldococcus</taxon>
    </lineage>
</organism>
<name>Y826_METJA</name>
<dbReference type="EMBL" id="L77117">
    <property type="protein sequence ID" value="AAB98825.1"/>
    <property type="molecule type" value="Genomic_DNA"/>
</dbReference>
<dbReference type="PIR" id="B64403">
    <property type="entry name" value="B64403"/>
</dbReference>
<dbReference type="RefSeq" id="WP_010870337.1">
    <property type="nucleotide sequence ID" value="NC_000909.1"/>
</dbReference>
<dbReference type="SMR" id="Q58236"/>
<dbReference type="STRING" id="243232.MJ_0826"/>
<dbReference type="PaxDb" id="243232-MJ_0826"/>
<dbReference type="EnsemblBacteria" id="AAB98825">
    <property type="protein sequence ID" value="AAB98825"/>
    <property type="gene ID" value="MJ_0826"/>
</dbReference>
<dbReference type="GeneID" id="1451709"/>
<dbReference type="KEGG" id="mja:MJ_0826"/>
<dbReference type="eggNOG" id="arCOG01912">
    <property type="taxonomic scope" value="Archaea"/>
</dbReference>
<dbReference type="HOGENOM" id="CLU_116732_3_0_2"/>
<dbReference type="InParanoid" id="Q58236"/>
<dbReference type="OrthoDB" id="60430at2157"/>
<dbReference type="PhylomeDB" id="Q58236"/>
<dbReference type="Proteomes" id="UP000000805">
    <property type="component" value="Chromosome"/>
</dbReference>
<dbReference type="GO" id="GO:0005886">
    <property type="term" value="C:plasma membrane"/>
    <property type="evidence" value="ECO:0007669"/>
    <property type="project" value="UniProtKB-SubCell"/>
</dbReference>
<dbReference type="FunFam" id="2.40.50.140:FF:000283">
    <property type="entry name" value="Hypothetical membrane protein, conserved"/>
    <property type="match status" value="1"/>
</dbReference>
<dbReference type="Gene3D" id="2.40.50.140">
    <property type="entry name" value="Nucleic acid-binding proteins"/>
    <property type="match status" value="1"/>
</dbReference>
<dbReference type="InterPro" id="IPR052165">
    <property type="entry name" value="Membrane_assoc_protease"/>
</dbReference>
<dbReference type="InterPro" id="IPR012340">
    <property type="entry name" value="NA-bd_OB-fold"/>
</dbReference>
<dbReference type="InterPro" id="IPR002810">
    <property type="entry name" value="NfeD-like_C"/>
</dbReference>
<dbReference type="PANTHER" id="PTHR33507:SF7">
    <property type="entry name" value="HYPOTHETICAL MEMBRANE PROTEIN, CONSERVED"/>
    <property type="match status" value="1"/>
</dbReference>
<dbReference type="PANTHER" id="PTHR33507">
    <property type="entry name" value="INNER MEMBRANE PROTEIN YBBJ"/>
    <property type="match status" value="1"/>
</dbReference>
<dbReference type="Pfam" id="PF01957">
    <property type="entry name" value="NfeD"/>
    <property type="match status" value="1"/>
</dbReference>
<dbReference type="SUPFAM" id="SSF141322">
    <property type="entry name" value="NfeD domain-like"/>
    <property type="match status" value="1"/>
</dbReference>
<feature type="chain" id="PRO_0000107064" description="Uncharacterized protein MJ0826">
    <location>
        <begin position="1"/>
        <end position="138"/>
    </location>
</feature>
<feature type="transmembrane region" description="Helical" evidence="1">
    <location>
        <begin position="1"/>
        <end position="21"/>
    </location>
</feature>
<feature type="transmembrane region" description="Helical" evidence="1">
    <location>
        <begin position="46"/>
        <end position="66"/>
    </location>
</feature>
<reference key="1">
    <citation type="journal article" date="1996" name="Science">
        <title>Complete genome sequence of the methanogenic archaeon, Methanococcus jannaschii.</title>
        <authorList>
            <person name="Bult C.J."/>
            <person name="White O."/>
            <person name="Olsen G.J."/>
            <person name="Zhou L."/>
            <person name="Fleischmann R.D."/>
            <person name="Sutton G.G."/>
            <person name="Blake J.A."/>
            <person name="FitzGerald L.M."/>
            <person name="Clayton R.A."/>
            <person name="Gocayne J.D."/>
            <person name="Kerlavage A.R."/>
            <person name="Dougherty B.A."/>
            <person name="Tomb J.-F."/>
            <person name="Adams M.D."/>
            <person name="Reich C.I."/>
            <person name="Overbeek R."/>
            <person name="Kirkness E.F."/>
            <person name="Weinstock K.G."/>
            <person name="Merrick J.M."/>
            <person name="Glodek A."/>
            <person name="Scott J.L."/>
            <person name="Geoghagen N.S.M."/>
            <person name="Weidman J.F."/>
            <person name="Fuhrmann J.L."/>
            <person name="Nguyen D."/>
            <person name="Utterback T.R."/>
            <person name="Kelley J.M."/>
            <person name="Peterson J.D."/>
            <person name="Sadow P.W."/>
            <person name="Hanna M.C."/>
            <person name="Cotton M.D."/>
            <person name="Roberts K.M."/>
            <person name="Hurst M.A."/>
            <person name="Kaine B.P."/>
            <person name="Borodovsky M."/>
            <person name="Klenk H.-P."/>
            <person name="Fraser C.M."/>
            <person name="Smith H.O."/>
            <person name="Woese C.R."/>
            <person name="Venter J.C."/>
        </authorList>
    </citation>
    <scope>NUCLEOTIDE SEQUENCE [LARGE SCALE GENOMIC DNA]</scope>
    <source>
        <strain>ATCC 43067 / DSM 2661 / JAL-1 / JCM 10045 / NBRC 100440</strain>
    </source>
</reference>
<protein>
    <recommendedName>
        <fullName>Uncharacterized protein MJ0826</fullName>
    </recommendedName>
</protein>
<gene>
    <name type="ordered locus">MJ0826</name>
</gene>
<comment type="subcellular location">
    <subcellularLocation>
        <location evidence="2">Cell membrane</location>
        <topology evidence="2">Multi-pass membrane protein</topology>
    </subcellularLocation>
</comment>
<proteinExistence type="predicted"/>
<accession>Q58236</accession>